<sequence>MARNELRPVIKLRSTAGTGFTYVTRKNRRNDPDRMTLRKYDPIARRHVDFREER</sequence>
<name>RL331_STRAW</name>
<gene>
    <name evidence="1" type="primary">rpmG1</name>
    <name type="ordered locus">SAV_4643</name>
</gene>
<keyword id="KW-1185">Reference proteome</keyword>
<keyword id="KW-0687">Ribonucleoprotein</keyword>
<keyword id="KW-0689">Ribosomal protein</keyword>
<organism>
    <name type="scientific">Streptomyces avermitilis (strain ATCC 31267 / DSM 46492 / JCM 5070 / NBRC 14893 / NCIMB 12804 / NRRL 8165 / MA-4680)</name>
    <dbReference type="NCBI Taxonomy" id="227882"/>
    <lineage>
        <taxon>Bacteria</taxon>
        <taxon>Bacillati</taxon>
        <taxon>Actinomycetota</taxon>
        <taxon>Actinomycetes</taxon>
        <taxon>Kitasatosporales</taxon>
        <taxon>Streptomycetaceae</taxon>
        <taxon>Streptomyces</taxon>
    </lineage>
</organism>
<accession>Q82EH2</accession>
<comment type="similarity">
    <text evidence="1">Belongs to the bacterial ribosomal protein bL33 family.</text>
</comment>
<proteinExistence type="inferred from homology"/>
<protein>
    <recommendedName>
        <fullName evidence="1">Large ribosomal subunit protein bL33A</fullName>
    </recommendedName>
    <alternativeName>
        <fullName evidence="1">50S ribosomal protein L33 1</fullName>
    </alternativeName>
</protein>
<evidence type="ECO:0000255" key="1">
    <source>
        <dbReference type="HAMAP-Rule" id="MF_00294"/>
    </source>
</evidence>
<feature type="chain" id="PRO_0000356751" description="Large ribosomal subunit protein bL33A">
    <location>
        <begin position="1"/>
        <end position="54"/>
    </location>
</feature>
<dbReference type="EMBL" id="BA000030">
    <property type="protein sequence ID" value="BAC72355.1"/>
    <property type="molecule type" value="Genomic_DNA"/>
</dbReference>
<dbReference type="SMR" id="Q82EH2"/>
<dbReference type="GeneID" id="41541724"/>
<dbReference type="KEGG" id="sma:SAVERM_4643"/>
<dbReference type="eggNOG" id="COG0267">
    <property type="taxonomic scope" value="Bacteria"/>
</dbReference>
<dbReference type="HOGENOM" id="CLU_190949_1_1_11"/>
<dbReference type="OrthoDB" id="21586at2"/>
<dbReference type="Proteomes" id="UP000000428">
    <property type="component" value="Chromosome"/>
</dbReference>
<dbReference type="GO" id="GO:0022625">
    <property type="term" value="C:cytosolic large ribosomal subunit"/>
    <property type="evidence" value="ECO:0007669"/>
    <property type="project" value="TreeGrafter"/>
</dbReference>
<dbReference type="GO" id="GO:0003735">
    <property type="term" value="F:structural constituent of ribosome"/>
    <property type="evidence" value="ECO:0007669"/>
    <property type="project" value="InterPro"/>
</dbReference>
<dbReference type="GO" id="GO:0006412">
    <property type="term" value="P:translation"/>
    <property type="evidence" value="ECO:0007669"/>
    <property type="project" value="UniProtKB-UniRule"/>
</dbReference>
<dbReference type="FunFam" id="2.20.28.120:FF:000002">
    <property type="entry name" value="50S ribosomal protein L33"/>
    <property type="match status" value="1"/>
</dbReference>
<dbReference type="Gene3D" id="2.20.28.120">
    <property type="entry name" value="Ribosomal protein L33"/>
    <property type="match status" value="1"/>
</dbReference>
<dbReference type="HAMAP" id="MF_00294">
    <property type="entry name" value="Ribosomal_bL33"/>
    <property type="match status" value="1"/>
</dbReference>
<dbReference type="InterPro" id="IPR001705">
    <property type="entry name" value="Ribosomal_bL33"/>
</dbReference>
<dbReference type="InterPro" id="IPR018264">
    <property type="entry name" value="Ribosomal_bL33_CS"/>
</dbReference>
<dbReference type="InterPro" id="IPR038584">
    <property type="entry name" value="Ribosomal_bL33_sf"/>
</dbReference>
<dbReference type="InterPro" id="IPR011332">
    <property type="entry name" value="Ribosomal_zn-bd"/>
</dbReference>
<dbReference type="NCBIfam" id="NF001860">
    <property type="entry name" value="PRK00595.1"/>
    <property type="match status" value="1"/>
</dbReference>
<dbReference type="NCBIfam" id="TIGR01023">
    <property type="entry name" value="rpmG_bact"/>
    <property type="match status" value="1"/>
</dbReference>
<dbReference type="PANTHER" id="PTHR15238">
    <property type="entry name" value="54S RIBOSOMAL PROTEIN L39, MITOCHONDRIAL"/>
    <property type="match status" value="1"/>
</dbReference>
<dbReference type="PANTHER" id="PTHR15238:SF1">
    <property type="entry name" value="LARGE RIBOSOMAL SUBUNIT PROTEIN BL33M"/>
    <property type="match status" value="1"/>
</dbReference>
<dbReference type="Pfam" id="PF00471">
    <property type="entry name" value="Ribosomal_L33"/>
    <property type="match status" value="1"/>
</dbReference>
<dbReference type="SUPFAM" id="SSF57829">
    <property type="entry name" value="Zn-binding ribosomal proteins"/>
    <property type="match status" value="1"/>
</dbReference>
<dbReference type="PROSITE" id="PS00582">
    <property type="entry name" value="RIBOSOMAL_L33"/>
    <property type="match status" value="1"/>
</dbReference>
<reference key="1">
    <citation type="journal article" date="2001" name="Proc. Natl. Acad. Sci. U.S.A.">
        <title>Genome sequence of an industrial microorganism Streptomyces avermitilis: deducing the ability of producing secondary metabolites.</title>
        <authorList>
            <person name="Omura S."/>
            <person name="Ikeda H."/>
            <person name="Ishikawa J."/>
            <person name="Hanamoto A."/>
            <person name="Takahashi C."/>
            <person name="Shinose M."/>
            <person name="Takahashi Y."/>
            <person name="Horikawa H."/>
            <person name="Nakazawa H."/>
            <person name="Osonoe T."/>
            <person name="Kikuchi H."/>
            <person name="Shiba T."/>
            <person name="Sakaki Y."/>
            <person name="Hattori M."/>
        </authorList>
    </citation>
    <scope>NUCLEOTIDE SEQUENCE [LARGE SCALE GENOMIC DNA]</scope>
    <source>
        <strain>ATCC 31267 / DSM 46492 / JCM 5070 / NBRC 14893 / NCIMB 12804 / NRRL 8165 / MA-4680</strain>
    </source>
</reference>
<reference key="2">
    <citation type="journal article" date="2003" name="Nat. Biotechnol.">
        <title>Complete genome sequence and comparative analysis of the industrial microorganism Streptomyces avermitilis.</title>
        <authorList>
            <person name="Ikeda H."/>
            <person name="Ishikawa J."/>
            <person name="Hanamoto A."/>
            <person name="Shinose M."/>
            <person name="Kikuchi H."/>
            <person name="Shiba T."/>
            <person name="Sakaki Y."/>
            <person name="Hattori M."/>
            <person name="Omura S."/>
        </authorList>
    </citation>
    <scope>NUCLEOTIDE SEQUENCE [LARGE SCALE GENOMIC DNA]</scope>
    <source>
        <strain>ATCC 31267 / DSM 46492 / JCM 5070 / NBRC 14893 / NCIMB 12804 / NRRL 8165 / MA-4680</strain>
    </source>
</reference>